<organism>
    <name type="scientific">Staphylococcus aureus (strain MW2)</name>
    <dbReference type="NCBI Taxonomy" id="196620"/>
    <lineage>
        <taxon>Bacteria</taxon>
        <taxon>Bacillati</taxon>
        <taxon>Bacillota</taxon>
        <taxon>Bacilli</taxon>
        <taxon>Bacillales</taxon>
        <taxon>Staphylococcaceae</taxon>
        <taxon>Staphylococcus</taxon>
    </lineage>
</organism>
<gene>
    <name type="primary">norA</name>
    <name type="ordered locus">MW0657</name>
</gene>
<proteinExistence type="inferred from homology"/>
<feature type="chain" id="PRO_0000173373" description="Quinolone resistance protein NorA">
    <location>
        <begin position="1"/>
        <end position="388"/>
    </location>
</feature>
<feature type="transmembrane region" description="Helical" evidence="2">
    <location>
        <begin position="5"/>
        <end position="25"/>
    </location>
</feature>
<feature type="transmembrane region" description="Helical" evidence="2">
    <location>
        <begin position="42"/>
        <end position="62"/>
    </location>
</feature>
<feature type="transmembrane region" description="Helical" evidence="2">
    <location>
        <begin position="69"/>
        <end position="89"/>
    </location>
</feature>
<feature type="transmembrane region" description="Helical" evidence="2">
    <location>
        <begin position="99"/>
        <end position="119"/>
    </location>
</feature>
<feature type="transmembrane region" description="Helical" evidence="2">
    <location>
        <begin position="129"/>
        <end position="149"/>
    </location>
</feature>
<feature type="transmembrane region" description="Helical" evidence="2">
    <location>
        <begin position="157"/>
        <end position="177"/>
    </location>
</feature>
<feature type="transmembrane region" description="Helical" evidence="2">
    <location>
        <begin position="201"/>
        <end position="221"/>
    </location>
</feature>
<feature type="transmembrane region" description="Helical" evidence="2">
    <location>
        <begin position="239"/>
        <end position="259"/>
    </location>
</feature>
<feature type="transmembrane region" description="Helical" evidence="2">
    <location>
        <begin position="269"/>
        <end position="289"/>
    </location>
</feature>
<feature type="transmembrane region" description="Helical" evidence="2">
    <location>
        <begin position="293"/>
        <end position="313"/>
    </location>
</feature>
<feature type="transmembrane region" description="Helical" evidence="2">
    <location>
        <begin position="331"/>
        <end position="351"/>
    </location>
</feature>
<feature type="transmembrane region" description="Helical" evidence="2">
    <location>
        <begin position="355"/>
        <end position="375"/>
    </location>
</feature>
<reference key="1">
    <citation type="journal article" date="2002" name="Lancet">
        <title>Genome and virulence determinants of high virulence community-acquired MRSA.</title>
        <authorList>
            <person name="Baba T."/>
            <person name="Takeuchi F."/>
            <person name="Kuroda M."/>
            <person name="Yuzawa H."/>
            <person name="Aoki K."/>
            <person name="Oguchi A."/>
            <person name="Nagai Y."/>
            <person name="Iwama N."/>
            <person name="Asano K."/>
            <person name="Naimi T."/>
            <person name="Kuroda H."/>
            <person name="Cui L."/>
            <person name="Yamamoto K."/>
            <person name="Hiramatsu K."/>
        </authorList>
    </citation>
    <scope>NUCLEOTIDE SEQUENCE [LARGE SCALE GENOMIC DNA]</scope>
    <source>
        <strain>MW2</strain>
    </source>
</reference>
<comment type="function">
    <text evidence="1">Involved in quinolone resistance. May constitute a membrane-associated active efflux pump of hydrophilic quinolones (By similarity).</text>
</comment>
<comment type="subcellular location">
    <subcellularLocation>
        <location evidence="3">Cell membrane</location>
        <topology evidence="3">Multi-pass membrane protein</topology>
    </subcellularLocation>
</comment>
<comment type="similarity">
    <text evidence="3">Belongs to the major facilitator superfamily. TCR/Tet family.</text>
</comment>
<dbReference type="EMBL" id="BA000033">
    <property type="protein sequence ID" value="BAB94522.1"/>
    <property type="molecule type" value="Genomic_DNA"/>
</dbReference>
<dbReference type="RefSeq" id="WP_001041274.1">
    <property type="nucleotide sequence ID" value="NC_003923.1"/>
</dbReference>
<dbReference type="SMR" id="P0A0J6"/>
<dbReference type="CARD" id="ARO:3004667">
    <property type="molecule name" value="Saur_norA"/>
    <property type="mechanism identifier" value="ARO:0010000"/>
    <property type="mechanism name" value="antibiotic efflux"/>
</dbReference>
<dbReference type="KEGG" id="sam:MW0657"/>
<dbReference type="HOGENOM" id="CLU_001265_10_11_9"/>
<dbReference type="GO" id="GO:0005886">
    <property type="term" value="C:plasma membrane"/>
    <property type="evidence" value="ECO:0007669"/>
    <property type="project" value="UniProtKB-SubCell"/>
</dbReference>
<dbReference type="GO" id="GO:0042910">
    <property type="term" value="F:xenobiotic transmembrane transporter activity"/>
    <property type="evidence" value="ECO:0007669"/>
    <property type="project" value="InterPro"/>
</dbReference>
<dbReference type="CDD" id="cd17325">
    <property type="entry name" value="MFS_MdtG_SLC18_like"/>
    <property type="match status" value="1"/>
</dbReference>
<dbReference type="Gene3D" id="1.20.1250.20">
    <property type="entry name" value="MFS general substrate transporter like domains"/>
    <property type="match status" value="1"/>
</dbReference>
<dbReference type="InterPro" id="IPR011701">
    <property type="entry name" value="MFS"/>
</dbReference>
<dbReference type="InterPro" id="IPR020846">
    <property type="entry name" value="MFS_dom"/>
</dbReference>
<dbReference type="InterPro" id="IPR050189">
    <property type="entry name" value="MFS_Efflux_Transporters"/>
</dbReference>
<dbReference type="InterPro" id="IPR036259">
    <property type="entry name" value="MFS_trans_sf"/>
</dbReference>
<dbReference type="InterPro" id="IPR004734">
    <property type="entry name" value="Multidrug-R"/>
</dbReference>
<dbReference type="InterPro" id="IPR001958">
    <property type="entry name" value="Tet-R_TetA/multi-R_MdtG-like"/>
</dbReference>
<dbReference type="NCBIfam" id="TIGR00880">
    <property type="entry name" value="2_A_01_02"/>
    <property type="match status" value="1"/>
</dbReference>
<dbReference type="PANTHER" id="PTHR43124:SF3">
    <property type="entry name" value="CHLORAMPHENICOL EFFLUX PUMP RV0191"/>
    <property type="match status" value="1"/>
</dbReference>
<dbReference type="PANTHER" id="PTHR43124">
    <property type="entry name" value="PURINE EFFLUX PUMP PBUE"/>
    <property type="match status" value="1"/>
</dbReference>
<dbReference type="Pfam" id="PF07690">
    <property type="entry name" value="MFS_1"/>
    <property type="match status" value="1"/>
</dbReference>
<dbReference type="PRINTS" id="PR01035">
    <property type="entry name" value="TCRTETA"/>
</dbReference>
<dbReference type="SUPFAM" id="SSF103473">
    <property type="entry name" value="MFS general substrate transporter"/>
    <property type="match status" value="1"/>
</dbReference>
<dbReference type="PROSITE" id="PS50850">
    <property type="entry name" value="MFS"/>
    <property type="match status" value="1"/>
</dbReference>
<keyword id="KW-1003">Cell membrane</keyword>
<keyword id="KW-0472">Membrane</keyword>
<keyword id="KW-0812">Transmembrane</keyword>
<keyword id="KW-1133">Transmembrane helix</keyword>
<keyword id="KW-0813">Transport</keyword>
<name>NORA_STAAW</name>
<protein>
    <recommendedName>
        <fullName>Quinolone resistance protein NorA</fullName>
    </recommendedName>
</protein>
<sequence>MNKQIFVLYFNIFLIFLGIGLVIPVLPVYLKDLGLTGSDLGLLVAAFALSQMIISPFGGTLADKLGKKLIICIGLILFSVSEFMFAVGHNFSVLMLSRVIGGMSAGMVMPGVTGLIADISPSHQKAKNFGYMSAIINSGFILGPGIGGFMAEVSHRMPFYFAGALGILAFIMSIVLIHDPKKSTTSGFQKLEPQLLTKINWKVFITPVILTLVLSFGLSAFETLYSLYTADKVNYSPKDISIAITGGGIFGALFQIYFFDKFMKYFSELTFIAWSLLYSVVVLILLVFANGYWSIMLISFVVFIGFDMIRPAITNYFSNIAGERQGFAGGLNSTFTSMGNFIGPLIAGALFDVHIEAPIYMAIGVSLAGVVIVLIEKQHRAKLKEQNM</sequence>
<evidence type="ECO:0000250" key="1"/>
<evidence type="ECO:0000255" key="2"/>
<evidence type="ECO:0000305" key="3"/>
<accession>P0A0J6</accession>
<accession>P21191</accession>